<evidence type="ECO:0000255" key="1">
    <source>
        <dbReference type="HAMAP-Rule" id="MF_00104"/>
    </source>
</evidence>
<comment type="function">
    <text evidence="1">Digests double-stranded RNA. Involved in the processing of primary rRNA transcript to yield the immediate precursors to the large and small rRNAs (23S and 16S). Processes some mRNAs, and tRNAs when they are encoded in the rRNA operon. Processes pre-crRNA and tracrRNA of type II CRISPR loci if present in the organism.</text>
</comment>
<comment type="catalytic activity">
    <reaction evidence="1">
        <text>Endonucleolytic cleavage to 5'-phosphomonoester.</text>
        <dbReference type="EC" id="3.1.26.3"/>
    </reaction>
</comment>
<comment type="cofactor">
    <cofactor evidence="1">
        <name>Mg(2+)</name>
        <dbReference type="ChEBI" id="CHEBI:18420"/>
    </cofactor>
</comment>
<comment type="subunit">
    <text evidence="1">Homodimer.</text>
</comment>
<comment type="subcellular location">
    <subcellularLocation>
        <location evidence="1">Cytoplasm</location>
    </subcellularLocation>
</comment>
<comment type="similarity">
    <text evidence="1">Belongs to the ribonuclease III family.</text>
</comment>
<reference key="1">
    <citation type="journal article" date="2005" name="J. Bacteriol.">
        <title>Swine and poultry pathogens: the complete genome sequences of two strains of Mycoplasma hyopneumoniae and a strain of Mycoplasma synoviae.</title>
        <authorList>
            <person name="Vasconcelos A.T.R."/>
            <person name="Ferreira H.B."/>
            <person name="Bizarro C.V."/>
            <person name="Bonatto S.L."/>
            <person name="Carvalho M.O."/>
            <person name="Pinto P.M."/>
            <person name="Almeida D.F."/>
            <person name="Almeida L.G.P."/>
            <person name="Almeida R."/>
            <person name="Alves-Junior L."/>
            <person name="Assuncao E.N."/>
            <person name="Azevedo V.A.C."/>
            <person name="Bogo M.R."/>
            <person name="Brigido M.M."/>
            <person name="Brocchi M."/>
            <person name="Burity H.A."/>
            <person name="Camargo A.A."/>
            <person name="Camargo S.S."/>
            <person name="Carepo M.S."/>
            <person name="Carraro D.M."/>
            <person name="de Mattos Cascardo J.C."/>
            <person name="Castro L.A."/>
            <person name="Cavalcanti G."/>
            <person name="Chemale G."/>
            <person name="Collevatti R.G."/>
            <person name="Cunha C.W."/>
            <person name="Dallagiovanna B."/>
            <person name="Dambros B.P."/>
            <person name="Dellagostin O.A."/>
            <person name="Falcao C."/>
            <person name="Fantinatti-Garboggini F."/>
            <person name="Felipe M.S.S."/>
            <person name="Fiorentin L."/>
            <person name="Franco G.R."/>
            <person name="Freitas N.S.A."/>
            <person name="Frias D."/>
            <person name="Grangeiro T.B."/>
            <person name="Grisard E.C."/>
            <person name="Guimaraes C.T."/>
            <person name="Hungria M."/>
            <person name="Jardim S.N."/>
            <person name="Krieger M.A."/>
            <person name="Laurino J.P."/>
            <person name="Lima L.F.A."/>
            <person name="Lopes M.I."/>
            <person name="Loreto E.L.S."/>
            <person name="Madeira H.M.F."/>
            <person name="Manfio G.P."/>
            <person name="Maranhao A.Q."/>
            <person name="Martinkovics C.T."/>
            <person name="Medeiros S.R.B."/>
            <person name="Moreira M.A.M."/>
            <person name="Neiva M."/>
            <person name="Ramalho-Neto C.E."/>
            <person name="Nicolas M.F."/>
            <person name="Oliveira S.C."/>
            <person name="Paixao R.F.C."/>
            <person name="Pedrosa F.O."/>
            <person name="Pena S.D.J."/>
            <person name="Pereira M."/>
            <person name="Pereira-Ferrari L."/>
            <person name="Piffer I."/>
            <person name="Pinto L.S."/>
            <person name="Potrich D.P."/>
            <person name="Salim A.C.M."/>
            <person name="Santos F.R."/>
            <person name="Schmitt R."/>
            <person name="Schneider M.P.C."/>
            <person name="Schrank A."/>
            <person name="Schrank I.S."/>
            <person name="Schuck A.F."/>
            <person name="Seuanez H.N."/>
            <person name="Silva D.W."/>
            <person name="Silva R."/>
            <person name="Silva S.C."/>
            <person name="Soares C.M.A."/>
            <person name="Souza K.R.L."/>
            <person name="Souza R.C."/>
            <person name="Staats C.C."/>
            <person name="Steffens M.B.R."/>
            <person name="Teixeira S.M.R."/>
            <person name="Urmenyi T.P."/>
            <person name="Vainstein M.H."/>
            <person name="Zuccherato L.W."/>
            <person name="Simpson A.J.G."/>
            <person name="Zaha A."/>
        </authorList>
    </citation>
    <scope>NUCLEOTIDE SEQUENCE [LARGE SCALE GENOMIC DNA]</scope>
    <source>
        <strain>53</strain>
    </source>
</reference>
<sequence length="231" mass="26235">MEKDNQPSIEELKAFLQKNNIEYKNIDLFIEATTHKTYSKVNKNSKDYERLEFLGDSLVGFLISDYCVREFSSLEPGELSRLRSKLVDKLALFKIAQKLKVEQIIKTGPKKARNEVLSSSNVLSDVVEALIAAIYLDQGMQSAKDFIKSHFYEIANKAQNKPNKDPKSELQEYFQTISAETVKYETIEIPNKRSFESKAWHLNKIYGTGVGLSKKDAEKNAAANALSKLKT</sequence>
<proteinExistence type="inferred from homology"/>
<protein>
    <recommendedName>
        <fullName evidence="1">Ribonuclease 3</fullName>
        <ecNumber evidence="1">3.1.26.3</ecNumber>
    </recommendedName>
    <alternativeName>
        <fullName evidence="1">Ribonuclease III</fullName>
        <shortName evidence="1">RNase III</shortName>
    </alternativeName>
</protein>
<feature type="chain" id="PRO_0000228552" description="Ribonuclease 3">
    <location>
        <begin position="1"/>
        <end position="231"/>
    </location>
</feature>
<feature type="domain" description="RNase III" evidence="1">
    <location>
        <begin position="12"/>
        <end position="139"/>
    </location>
</feature>
<feature type="domain" description="DRBM" evidence="1">
    <location>
        <begin position="165"/>
        <end position="231"/>
    </location>
</feature>
<feature type="active site" evidence="1">
    <location>
        <position position="56"/>
    </location>
</feature>
<feature type="active site" evidence="1">
    <location>
        <position position="128"/>
    </location>
</feature>
<feature type="binding site" evidence="1">
    <location>
        <position position="52"/>
    </location>
    <ligand>
        <name>Mg(2+)</name>
        <dbReference type="ChEBI" id="CHEBI:18420"/>
    </ligand>
</feature>
<feature type="binding site" evidence="1">
    <location>
        <position position="125"/>
    </location>
    <ligand>
        <name>Mg(2+)</name>
        <dbReference type="ChEBI" id="CHEBI:18420"/>
    </ligand>
</feature>
<feature type="binding site" evidence="1">
    <location>
        <position position="128"/>
    </location>
    <ligand>
        <name>Mg(2+)</name>
        <dbReference type="ChEBI" id="CHEBI:18420"/>
    </ligand>
</feature>
<accession>Q4A589</accession>
<name>RNC_MYCS5</name>
<dbReference type="EC" id="3.1.26.3" evidence="1"/>
<dbReference type="EMBL" id="AE017245">
    <property type="protein sequence ID" value="AAZ44082.1"/>
    <property type="molecule type" value="Genomic_DNA"/>
</dbReference>
<dbReference type="RefSeq" id="WP_011283811.1">
    <property type="nucleotide sequence ID" value="NC_007294.1"/>
</dbReference>
<dbReference type="SMR" id="Q4A589"/>
<dbReference type="STRING" id="262723.MS53_0675"/>
<dbReference type="KEGG" id="msy:MS53_0675"/>
<dbReference type="eggNOG" id="COG0571">
    <property type="taxonomic scope" value="Bacteria"/>
</dbReference>
<dbReference type="HOGENOM" id="CLU_000907_1_1_14"/>
<dbReference type="OrthoDB" id="9805026at2"/>
<dbReference type="Proteomes" id="UP000000549">
    <property type="component" value="Chromosome"/>
</dbReference>
<dbReference type="GO" id="GO:0005737">
    <property type="term" value="C:cytoplasm"/>
    <property type="evidence" value="ECO:0007669"/>
    <property type="project" value="UniProtKB-SubCell"/>
</dbReference>
<dbReference type="GO" id="GO:0003725">
    <property type="term" value="F:double-stranded RNA binding"/>
    <property type="evidence" value="ECO:0007669"/>
    <property type="project" value="TreeGrafter"/>
</dbReference>
<dbReference type="GO" id="GO:0046872">
    <property type="term" value="F:metal ion binding"/>
    <property type="evidence" value="ECO:0007669"/>
    <property type="project" value="UniProtKB-KW"/>
</dbReference>
<dbReference type="GO" id="GO:0004525">
    <property type="term" value="F:ribonuclease III activity"/>
    <property type="evidence" value="ECO:0007669"/>
    <property type="project" value="UniProtKB-UniRule"/>
</dbReference>
<dbReference type="GO" id="GO:0019843">
    <property type="term" value="F:rRNA binding"/>
    <property type="evidence" value="ECO:0007669"/>
    <property type="project" value="UniProtKB-KW"/>
</dbReference>
<dbReference type="GO" id="GO:0006397">
    <property type="term" value="P:mRNA processing"/>
    <property type="evidence" value="ECO:0007669"/>
    <property type="project" value="UniProtKB-UniRule"/>
</dbReference>
<dbReference type="GO" id="GO:0010468">
    <property type="term" value="P:regulation of gene expression"/>
    <property type="evidence" value="ECO:0007669"/>
    <property type="project" value="TreeGrafter"/>
</dbReference>
<dbReference type="GO" id="GO:0006364">
    <property type="term" value="P:rRNA processing"/>
    <property type="evidence" value="ECO:0007669"/>
    <property type="project" value="UniProtKB-UniRule"/>
</dbReference>
<dbReference type="GO" id="GO:0008033">
    <property type="term" value="P:tRNA processing"/>
    <property type="evidence" value="ECO:0007669"/>
    <property type="project" value="UniProtKB-KW"/>
</dbReference>
<dbReference type="CDD" id="cd10845">
    <property type="entry name" value="DSRM_RNAse_III_family"/>
    <property type="match status" value="1"/>
</dbReference>
<dbReference type="CDD" id="cd00593">
    <property type="entry name" value="RIBOc"/>
    <property type="match status" value="1"/>
</dbReference>
<dbReference type="FunFam" id="1.10.1520.10:FF:000001">
    <property type="entry name" value="Ribonuclease 3"/>
    <property type="match status" value="1"/>
</dbReference>
<dbReference type="Gene3D" id="3.30.160.20">
    <property type="match status" value="1"/>
</dbReference>
<dbReference type="Gene3D" id="1.10.1520.10">
    <property type="entry name" value="Ribonuclease III domain"/>
    <property type="match status" value="1"/>
</dbReference>
<dbReference type="HAMAP" id="MF_00104">
    <property type="entry name" value="RNase_III"/>
    <property type="match status" value="1"/>
</dbReference>
<dbReference type="InterPro" id="IPR014720">
    <property type="entry name" value="dsRBD_dom"/>
</dbReference>
<dbReference type="InterPro" id="IPR011907">
    <property type="entry name" value="RNase_III"/>
</dbReference>
<dbReference type="InterPro" id="IPR000999">
    <property type="entry name" value="RNase_III_dom"/>
</dbReference>
<dbReference type="InterPro" id="IPR036389">
    <property type="entry name" value="RNase_III_sf"/>
</dbReference>
<dbReference type="NCBIfam" id="TIGR02191">
    <property type="entry name" value="RNaseIII"/>
    <property type="match status" value="1"/>
</dbReference>
<dbReference type="PANTHER" id="PTHR11207:SF0">
    <property type="entry name" value="RIBONUCLEASE 3"/>
    <property type="match status" value="1"/>
</dbReference>
<dbReference type="PANTHER" id="PTHR11207">
    <property type="entry name" value="RIBONUCLEASE III"/>
    <property type="match status" value="1"/>
</dbReference>
<dbReference type="Pfam" id="PF00035">
    <property type="entry name" value="dsrm"/>
    <property type="match status" value="1"/>
</dbReference>
<dbReference type="Pfam" id="PF14622">
    <property type="entry name" value="Ribonucleas_3_3"/>
    <property type="match status" value="1"/>
</dbReference>
<dbReference type="SMART" id="SM00358">
    <property type="entry name" value="DSRM"/>
    <property type="match status" value="1"/>
</dbReference>
<dbReference type="SMART" id="SM00535">
    <property type="entry name" value="RIBOc"/>
    <property type="match status" value="1"/>
</dbReference>
<dbReference type="SUPFAM" id="SSF54768">
    <property type="entry name" value="dsRNA-binding domain-like"/>
    <property type="match status" value="1"/>
</dbReference>
<dbReference type="SUPFAM" id="SSF69065">
    <property type="entry name" value="RNase III domain-like"/>
    <property type="match status" value="1"/>
</dbReference>
<dbReference type="PROSITE" id="PS50137">
    <property type="entry name" value="DS_RBD"/>
    <property type="match status" value="1"/>
</dbReference>
<dbReference type="PROSITE" id="PS00517">
    <property type="entry name" value="RNASE_3_1"/>
    <property type="match status" value="1"/>
</dbReference>
<dbReference type="PROSITE" id="PS50142">
    <property type="entry name" value="RNASE_3_2"/>
    <property type="match status" value="1"/>
</dbReference>
<gene>
    <name evidence="1" type="primary">rnc</name>
    <name type="ordered locus">MS53_0675</name>
</gene>
<organism>
    <name type="scientific">Mycoplasmopsis synoviae (strain 53)</name>
    <name type="common">Mycoplasma synoviae</name>
    <dbReference type="NCBI Taxonomy" id="262723"/>
    <lineage>
        <taxon>Bacteria</taxon>
        <taxon>Bacillati</taxon>
        <taxon>Mycoplasmatota</taxon>
        <taxon>Mycoplasmoidales</taxon>
        <taxon>Metamycoplasmataceae</taxon>
        <taxon>Mycoplasmopsis</taxon>
    </lineage>
</organism>
<keyword id="KW-0963">Cytoplasm</keyword>
<keyword id="KW-0255">Endonuclease</keyword>
<keyword id="KW-0378">Hydrolase</keyword>
<keyword id="KW-0460">Magnesium</keyword>
<keyword id="KW-0479">Metal-binding</keyword>
<keyword id="KW-0507">mRNA processing</keyword>
<keyword id="KW-0540">Nuclease</keyword>
<keyword id="KW-1185">Reference proteome</keyword>
<keyword id="KW-0694">RNA-binding</keyword>
<keyword id="KW-0698">rRNA processing</keyword>
<keyword id="KW-0699">rRNA-binding</keyword>
<keyword id="KW-0819">tRNA processing</keyword>